<feature type="chain" id="PRO_1000205538" description="GTPase Era">
    <location>
        <begin position="1"/>
        <end position="307"/>
    </location>
</feature>
<feature type="domain" description="Era-type G" evidence="2">
    <location>
        <begin position="14"/>
        <end position="184"/>
    </location>
</feature>
<feature type="domain" description="KH type-2" evidence="1">
    <location>
        <begin position="215"/>
        <end position="292"/>
    </location>
</feature>
<feature type="region of interest" description="G1" evidence="2">
    <location>
        <begin position="22"/>
        <end position="29"/>
    </location>
</feature>
<feature type="region of interest" description="G2" evidence="2">
    <location>
        <begin position="48"/>
        <end position="52"/>
    </location>
</feature>
<feature type="region of interest" description="G3" evidence="2">
    <location>
        <begin position="69"/>
        <end position="72"/>
    </location>
</feature>
<feature type="region of interest" description="G4" evidence="2">
    <location>
        <begin position="131"/>
        <end position="134"/>
    </location>
</feature>
<feature type="region of interest" description="G5" evidence="2">
    <location>
        <begin position="162"/>
        <end position="164"/>
    </location>
</feature>
<feature type="binding site" evidence="1">
    <location>
        <begin position="22"/>
        <end position="29"/>
    </location>
    <ligand>
        <name>GTP</name>
        <dbReference type="ChEBI" id="CHEBI:37565"/>
    </ligand>
</feature>
<feature type="binding site" evidence="1">
    <location>
        <begin position="69"/>
        <end position="73"/>
    </location>
    <ligand>
        <name>GTP</name>
        <dbReference type="ChEBI" id="CHEBI:37565"/>
    </ligand>
</feature>
<feature type="binding site" evidence="1">
    <location>
        <begin position="131"/>
        <end position="134"/>
    </location>
    <ligand>
        <name>GTP</name>
        <dbReference type="ChEBI" id="CHEBI:37565"/>
    </ligand>
</feature>
<name>ERA_DEIDV</name>
<evidence type="ECO:0000255" key="1">
    <source>
        <dbReference type="HAMAP-Rule" id="MF_00367"/>
    </source>
</evidence>
<evidence type="ECO:0000255" key="2">
    <source>
        <dbReference type="PROSITE-ProRule" id="PRU01050"/>
    </source>
</evidence>
<dbReference type="EMBL" id="CP001114">
    <property type="protein sequence ID" value="ACO46838.1"/>
    <property type="molecule type" value="Genomic_DNA"/>
</dbReference>
<dbReference type="RefSeq" id="WP_012693960.1">
    <property type="nucleotide sequence ID" value="NC_012526.1"/>
</dbReference>
<dbReference type="SMR" id="C1CXC1"/>
<dbReference type="STRING" id="546414.Deide_18500"/>
<dbReference type="PaxDb" id="546414-Deide_18500"/>
<dbReference type="KEGG" id="ddr:Deide_18500"/>
<dbReference type="eggNOG" id="COG1159">
    <property type="taxonomic scope" value="Bacteria"/>
</dbReference>
<dbReference type="HOGENOM" id="CLU_038009_1_0_0"/>
<dbReference type="OrthoDB" id="9805918at2"/>
<dbReference type="Proteomes" id="UP000002208">
    <property type="component" value="Chromosome"/>
</dbReference>
<dbReference type="GO" id="GO:0005829">
    <property type="term" value="C:cytosol"/>
    <property type="evidence" value="ECO:0007669"/>
    <property type="project" value="TreeGrafter"/>
</dbReference>
<dbReference type="GO" id="GO:0005886">
    <property type="term" value="C:plasma membrane"/>
    <property type="evidence" value="ECO:0007669"/>
    <property type="project" value="UniProtKB-SubCell"/>
</dbReference>
<dbReference type="GO" id="GO:0005525">
    <property type="term" value="F:GTP binding"/>
    <property type="evidence" value="ECO:0007669"/>
    <property type="project" value="UniProtKB-UniRule"/>
</dbReference>
<dbReference type="GO" id="GO:0003924">
    <property type="term" value="F:GTPase activity"/>
    <property type="evidence" value="ECO:0007669"/>
    <property type="project" value="UniProtKB-UniRule"/>
</dbReference>
<dbReference type="GO" id="GO:0043024">
    <property type="term" value="F:ribosomal small subunit binding"/>
    <property type="evidence" value="ECO:0007669"/>
    <property type="project" value="TreeGrafter"/>
</dbReference>
<dbReference type="GO" id="GO:0070181">
    <property type="term" value="F:small ribosomal subunit rRNA binding"/>
    <property type="evidence" value="ECO:0007669"/>
    <property type="project" value="UniProtKB-UniRule"/>
</dbReference>
<dbReference type="GO" id="GO:0000028">
    <property type="term" value="P:ribosomal small subunit assembly"/>
    <property type="evidence" value="ECO:0007669"/>
    <property type="project" value="TreeGrafter"/>
</dbReference>
<dbReference type="CDD" id="cd04163">
    <property type="entry name" value="Era"/>
    <property type="match status" value="1"/>
</dbReference>
<dbReference type="CDD" id="cd22534">
    <property type="entry name" value="KH-II_Era"/>
    <property type="match status" value="1"/>
</dbReference>
<dbReference type="FunFam" id="3.30.300.20:FF:000003">
    <property type="entry name" value="GTPase Era"/>
    <property type="match status" value="1"/>
</dbReference>
<dbReference type="Gene3D" id="3.30.300.20">
    <property type="match status" value="1"/>
</dbReference>
<dbReference type="Gene3D" id="3.40.50.300">
    <property type="entry name" value="P-loop containing nucleotide triphosphate hydrolases"/>
    <property type="match status" value="1"/>
</dbReference>
<dbReference type="HAMAP" id="MF_00367">
    <property type="entry name" value="GTPase_Era"/>
    <property type="match status" value="1"/>
</dbReference>
<dbReference type="InterPro" id="IPR030388">
    <property type="entry name" value="G_ERA_dom"/>
</dbReference>
<dbReference type="InterPro" id="IPR006073">
    <property type="entry name" value="GTP-bd"/>
</dbReference>
<dbReference type="InterPro" id="IPR005662">
    <property type="entry name" value="GTPase_Era-like"/>
</dbReference>
<dbReference type="InterPro" id="IPR015946">
    <property type="entry name" value="KH_dom-like_a/b"/>
</dbReference>
<dbReference type="InterPro" id="IPR004044">
    <property type="entry name" value="KH_dom_type_2"/>
</dbReference>
<dbReference type="InterPro" id="IPR009019">
    <property type="entry name" value="KH_sf_prok-type"/>
</dbReference>
<dbReference type="InterPro" id="IPR027417">
    <property type="entry name" value="P-loop_NTPase"/>
</dbReference>
<dbReference type="InterPro" id="IPR005225">
    <property type="entry name" value="Small_GTP-bd"/>
</dbReference>
<dbReference type="NCBIfam" id="TIGR00436">
    <property type="entry name" value="era"/>
    <property type="match status" value="1"/>
</dbReference>
<dbReference type="NCBIfam" id="NF000908">
    <property type="entry name" value="PRK00089.1"/>
    <property type="match status" value="1"/>
</dbReference>
<dbReference type="NCBIfam" id="TIGR00231">
    <property type="entry name" value="small_GTP"/>
    <property type="match status" value="1"/>
</dbReference>
<dbReference type="PANTHER" id="PTHR42698">
    <property type="entry name" value="GTPASE ERA"/>
    <property type="match status" value="1"/>
</dbReference>
<dbReference type="PANTHER" id="PTHR42698:SF1">
    <property type="entry name" value="GTPASE ERA, MITOCHONDRIAL"/>
    <property type="match status" value="1"/>
</dbReference>
<dbReference type="Pfam" id="PF07650">
    <property type="entry name" value="KH_2"/>
    <property type="match status" value="1"/>
</dbReference>
<dbReference type="Pfam" id="PF01926">
    <property type="entry name" value="MMR_HSR1"/>
    <property type="match status" value="1"/>
</dbReference>
<dbReference type="PRINTS" id="PR00326">
    <property type="entry name" value="GTP1OBG"/>
</dbReference>
<dbReference type="SUPFAM" id="SSF52540">
    <property type="entry name" value="P-loop containing nucleoside triphosphate hydrolases"/>
    <property type="match status" value="1"/>
</dbReference>
<dbReference type="SUPFAM" id="SSF54814">
    <property type="entry name" value="Prokaryotic type KH domain (KH-domain type II)"/>
    <property type="match status" value="1"/>
</dbReference>
<dbReference type="PROSITE" id="PS51713">
    <property type="entry name" value="G_ERA"/>
    <property type="match status" value="1"/>
</dbReference>
<dbReference type="PROSITE" id="PS50823">
    <property type="entry name" value="KH_TYPE_2"/>
    <property type="match status" value="1"/>
</dbReference>
<comment type="function">
    <text evidence="1">An essential GTPase that binds both GDP and GTP, with rapid nucleotide exchange. Plays a role in 16S rRNA processing and 30S ribosomal subunit biogenesis and possibly also in cell cycle regulation and energy metabolism.</text>
</comment>
<comment type="subunit">
    <text evidence="1">Monomer.</text>
</comment>
<comment type="subcellular location">
    <subcellularLocation>
        <location>Cytoplasm</location>
    </subcellularLocation>
    <subcellularLocation>
        <location evidence="1">Cell membrane</location>
        <topology evidence="1">Peripheral membrane protein</topology>
    </subcellularLocation>
</comment>
<comment type="similarity">
    <text evidence="1 2">Belongs to the TRAFAC class TrmE-Era-EngA-EngB-Septin-like GTPase superfamily. Era GTPase family.</text>
</comment>
<gene>
    <name evidence="1" type="primary">era</name>
    <name type="ordered locus">Deide_18500</name>
</gene>
<organism>
    <name type="scientific">Deinococcus deserti (strain DSM 17065 / CIP 109153 / LMG 22923 / VCD115)</name>
    <dbReference type="NCBI Taxonomy" id="546414"/>
    <lineage>
        <taxon>Bacteria</taxon>
        <taxon>Thermotogati</taxon>
        <taxon>Deinococcota</taxon>
        <taxon>Deinococci</taxon>
        <taxon>Deinococcales</taxon>
        <taxon>Deinococcaceae</taxon>
        <taxon>Deinococcus</taxon>
    </lineage>
</organism>
<proteinExistence type="inferred from homology"/>
<protein>
    <recommendedName>
        <fullName evidence="1">GTPase Era</fullName>
    </recommendedName>
</protein>
<keyword id="KW-1003">Cell membrane</keyword>
<keyword id="KW-0963">Cytoplasm</keyword>
<keyword id="KW-0342">GTP-binding</keyword>
<keyword id="KW-0472">Membrane</keyword>
<keyword id="KW-0547">Nucleotide-binding</keyword>
<keyword id="KW-1185">Reference proteome</keyword>
<keyword id="KW-0690">Ribosome biogenesis</keyword>
<keyword id="KW-0694">RNA-binding</keyword>
<keyword id="KW-0699">rRNA-binding</keyword>
<reference key="1">
    <citation type="journal article" date="2009" name="PLoS Genet.">
        <title>Alliance of proteomics and genomics to unravel the specificities of Sahara bacterium Deinococcus deserti.</title>
        <authorList>
            <person name="de Groot A."/>
            <person name="Dulermo R."/>
            <person name="Ortet P."/>
            <person name="Blanchard L."/>
            <person name="Guerin P."/>
            <person name="Fernandez B."/>
            <person name="Vacherie B."/>
            <person name="Dossat C."/>
            <person name="Jolivet E."/>
            <person name="Siguier P."/>
            <person name="Chandler M."/>
            <person name="Barakat M."/>
            <person name="Dedieu A."/>
            <person name="Barbe V."/>
            <person name="Heulin T."/>
            <person name="Sommer S."/>
            <person name="Achouak W."/>
            <person name="Armengaud J."/>
        </authorList>
    </citation>
    <scope>NUCLEOTIDE SEQUENCE [LARGE SCALE GENOMIC DNA]</scope>
    <source>
        <strain>DSM 17065 / CIP 109153 / LMG 22923 / VCD115</strain>
    </source>
</reference>
<sequence length="307" mass="34299">MSDPSMTSDGATTHSGFVAIVGKPNVGKSTLLNSFLGTKVAPTSPRPQTTRRGVRGISTTDTHQIVFVDTPGLHKPKDALGKYMNHEVHSALADVDVIIWVVDLRHPPTDEDELVARQVRELPKPLFLVGNKTDAAKYPDEAMKLYRAQLEGRSAETSEIMLSAQNNPLQVATLREQILDILPENPFFYPRGAASDQSRETWAAEIIREEAMKKLREELPYAVATRVNRWTEREDGLQRIEGEIVVEKNAHKGMVIGSGGKQLREIGQAARKQLEVFLDRKVFLGLEVIVIPGWREDEEALRELGYE</sequence>
<accession>C1CXC1</accession>